<organism>
    <name type="scientific">Paramagnetospirillum magneticum (strain ATCC 700264 / AMB-1)</name>
    <name type="common">Magnetospirillum magneticum</name>
    <dbReference type="NCBI Taxonomy" id="342108"/>
    <lineage>
        <taxon>Bacteria</taxon>
        <taxon>Pseudomonadati</taxon>
        <taxon>Pseudomonadota</taxon>
        <taxon>Alphaproteobacteria</taxon>
        <taxon>Rhodospirillales</taxon>
        <taxon>Magnetospirillaceae</taxon>
        <taxon>Paramagnetospirillum</taxon>
    </lineage>
</organism>
<dbReference type="EMBL" id="AP007255">
    <property type="protein sequence ID" value="BAE48806.1"/>
    <property type="molecule type" value="Genomic_DNA"/>
</dbReference>
<dbReference type="RefSeq" id="WP_011382451.1">
    <property type="nucleotide sequence ID" value="NC_007626.1"/>
</dbReference>
<dbReference type="SMR" id="Q2WBG9"/>
<dbReference type="STRING" id="342108.amb0002"/>
<dbReference type="KEGG" id="mag:amb0002"/>
<dbReference type="HOGENOM" id="CLU_007831_2_2_5"/>
<dbReference type="OrthoDB" id="9815560at2"/>
<dbReference type="Proteomes" id="UP000007058">
    <property type="component" value="Chromosome"/>
</dbReference>
<dbReference type="GO" id="GO:0005829">
    <property type="term" value="C:cytosol"/>
    <property type="evidence" value="ECO:0007669"/>
    <property type="project" value="TreeGrafter"/>
</dbReference>
<dbReference type="GO" id="GO:0050660">
    <property type="term" value="F:flavin adenine dinucleotide binding"/>
    <property type="evidence" value="ECO:0007669"/>
    <property type="project" value="UniProtKB-UniRule"/>
</dbReference>
<dbReference type="GO" id="GO:0030488">
    <property type="term" value="P:tRNA methylation"/>
    <property type="evidence" value="ECO:0007669"/>
    <property type="project" value="TreeGrafter"/>
</dbReference>
<dbReference type="GO" id="GO:0002098">
    <property type="term" value="P:tRNA wobble uridine modification"/>
    <property type="evidence" value="ECO:0007669"/>
    <property type="project" value="InterPro"/>
</dbReference>
<dbReference type="FunFam" id="3.50.50.60:FF:000082">
    <property type="entry name" value="protein MTO1 homolog, mitochondrial isoform X1"/>
    <property type="match status" value="1"/>
</dbReference>
<dbReference type="FunFam" id="1.10.150.570:FF:000001">
    <property type="entry name" value="tRNA uridine 5-carboxymethylaminomethyl modification enzyme MnmG"/>
    <property type="match status" value="1"/>
</dbReference>
<dbReference type="FunFam" id="3.50.50.60:FF:000002">
    <property type="entry name" value="tRNA uridine 5-carboxymethylaminomethyl modification enzyme MnmG"/>
    <property type="match status" value="1"/>
</dbReference>
<dbReference type="Gene3D" id="3.50.50.60">
    <property type="entry name" value="FAD/NAD(P)-binding domain"/>
    <property type="match status" value="2"/>
</dbReference>
<dbReference type="Gene3D" id="1.10.150.570">
    <property type="entry name" value="GidA associated domain, C-terminal subdomain"/>
    <property type="match status" value="1"/>
</dbReference>
<dbReference type="Gene3D" id="1.10.10.1800">
    <property type="entry name" value="tRNA uridine 5-carboxymethylaminomethyl modification enzyme MnmG/GidA"/>
    <property type="match status" value="1"/>
</dbReference>
<dbReference type="HAMAP" id="MF_00129">
    <property type="entry name" value="MnmG_GidA"/>
    <property type="match status" value="1"/>
</dbReference>
<dbReference type="InterPro" id="IPR036188">
    <property type="entry name" value="FAD/NAD-bd_sf"/>
</dbReference>
<dbReference type="InterPro" id="IPR049312">
    <property type="entry name" value="GIDA_C_N"/>
</dbReference>
<dbReference type="InterPro" id="IPR004416">
    <property type="entry name" value="MnmG"/>
</dbReference>
<dbReference type="InterPro" id="IPR002218">
    <property type="entry name" value="MnmG-rel"/>
</dbReference>
<dbReference type="InterPro" id="IPR020595">
    <property type="entry name" value="MnmG-rel_CS"/>
</dbReference>
<dbReference type="InterPro" id="IPR026904">
    <property type="entry name" value="MnmG_C"/>
</dbReference>
<dbReference type="InterPro" id="IPR047001">
    <property type="entry name" value="MnmG_C_subdom"/>
</dbReference>
<dbReference type="InterPro" id="IPR044920">
    <property type="entry name" value="MnmG_C_subdom_sf"/>
</dbReference>
<dbReference type="InterPro" id="IPR040131">
    <property type="entry name" value="MnmG_N"/>
</dbReference>
<dbReference type="NCBIfam" id="TIGR00136">
    <property type="entry name" value="mnmG_gidA"/>
    <property type="match status" value="1"/>
</dbReference>
<dbReference type="PANTHER" id="PTHR11806">
    <property type="entry name" value="GLUCOSE INHIBITED DIVISION PROTEIN A"/>
    <property type="match status" value="1"/>
</dbReference>
<dbReference type="PANTHER" id="PTHR11806:SF0">
    <property type="entry name" value="PROTEIN MTO1 HOMOLOG, MITOCHONDRIAL"/>
    <property type="match status" value="1"/>
</dbReference>
<dbReference type="Pfam" id="PF01134">
    <property type="entry name" value="GIDA"/>
    <property type="match status" value="1"/>
</dbReference>
<dbReference type="Pfam" id="PF21680">
    <property type="entry name" value="GIDA_C_1st"/>
    <property type="match status" value="1"/>
</dbReference>
<dbReference type="Pfam" id="PF13932">
    <property type="entry name" value="SAM_GIDA_C"/>
    <property type="match status" value="1"/>
</dbReference>
<dbReference type="PRINTS" id="PR00411">
    <property type="entry name" value="PNDRDTASEI"/>
</dbReference>
<dbReference type="SMART" id="SM01228">
    <property type="entry name" value="GIDA_assoc_3"/>
    <property type="match status" value="1"/>
</dbReference>
<dbReference type="SUPFAM" id="SSF51905">
    <property type="entry name" value="FAD/NAD(P)-binding domain"/>
    <property type="match status" value="1"/>
</dbReference>
<dbReference type="PROSITE" id="PS01280">
    <property type="entry name" value="GIDA_1"/>
    <property type="match status" value="1"/>
</dbReference>
<dbReference type="PROSITE" id="PS01281">
    <property type="entry name" value="GIDA_2"/>
    <property type="match status" value="1"/>
</dbReference>
<keyword id="KW-0963">Cytoplasm</keyword>
<keyword id="KW-0274">FAD</keyword>
<keyword id="KW-0285">Flavoprotein</keyword>
<keyword id="KW-0520">NAD</keyword>
<keyword id="KW-0819">tRNA processing</keyword>
<feature type="chain" id="PRO_0000345295" description="tRNA uridine 5-carboxymethylaminomethyl modification enzyme MnmG">
    <location>
        <begin position="1"/>
        <end position="637"/>
    </location>
</feature>
<feature type="binding site" evidence="1">
    <location>
        <begin position="23"/>
        <end position="28"/>
    </location>
    <ligand>
        <name>FAD</name>
        <dbReference type="ChEBI" id="CHEBI:57692"/>
    </ligand>
</feature>
<feature type="binding site" evidence="1">
    <location>
        <begin position="282"/>
        <end position="296"/>
    </location>
    <ligand>
        <name>NAD(+)</name>
        <dbReference type="ChEBI" id="CHEBI:57540"/>
    </ligand>
</feature>
<sequence length="637" mass="68495">MRLTKYGVFHVKQTSSCDVVVIGAGHAGCEAAAAAARFGARTVLLTQRLETIGEMSCNPAIGGLAKGQLVREIDAMDGLMGRVIDRAGIQFRILNRSKGAAVQGPRAQADRKLYRLAMRAALDETENLSLLEGSAEDLVITDGRVAGVVLADGSTIACGAVVITTGTFLRGLIHLGEKTWPAGRVGDAPSLGLSLALERAGLPLGRLKTGTPARLDGRTIHWDSLDRQEGDDPPVPFSYLTERITTPQVACGITATTPETHAIIRANLERAPMYSGQIQSTGPRYCPSIEDKVVRFADRERHQIFLEPEGLDDHTVYPNGISTSLPEDVQLAMIATIPGLEQCRVIRPGYAIEYDFVDPRALHRSLETKGVGGLFLAGQINGTTGYEEAAGQGLMAGLNAARRCAGSAPLVLDRADAYLGVMIDDLVSLGTSEPYRMFTSRAEYRLLLRADNADSRLTPKGREAGCVDSERWAAFMVKAAGLERGRALLQSLKGSPDWLRRQGLEINRDGVVRSAWDLLAYPELGLQALAAVWPELDSLSGAVAEQLEIEGRYAGYLDRQEADIRAYRREEGLALSADLDYDAIGSLSNEVRQKLKAARPETLAAAARIPGVTPAAVTALLGHVKKMVLDWAEGPVP</sequence>
<protein>
    <recommendedName>
        <fullName evidence="1">tRNA uridine 5-carboxymethylaminomethyl modification enzyme MnmG</fullName>
    </recommendedName>
    <alternativeName>
        <fullName evidence="1">Glucose-inhibited division protein A</fullName>
    </alternativeName>
</protein>
<reference key="1">
    <citation type="journal article" date="2005" name="DNA Res.">
        <title>Complete genome sequence of the facultative anaerobic magnetotactic bacterium Magnetospirillum sp. strain AMB-1.</title>
        <authorList>
            <person name="Matsunaga T."/>
            <person name="Okamura Y."/>
            <person name="Fukuda Y."/>
            <person name="Wahyudi A.T."/>
            <person name="Murase Y."/>
            <person name="Takeyama H."/>
        </authorList>
    </citation>
    <scope>NUCLEOTIDE SEQUENCE [LARGE SCALE GENOMIC DNA]</scope>
    <source>
        <strain>ATCC 700264 / AMB-1</strain>
    </source>
</reference>
<evidence type="ECO:0000255" key="1">
    <source>
        <dbReference type="HAMAP-Rule" id="MF_00129"/>
    </source>
</evidence>
<accession>Q2WBG9</accession>
<gene>
    <name evidence="1" type="primary">mnmG</name>
    <name evidence="1" type="synonym">gidA</name>
    <name type="ordered locus">amb0002</name>
</gene>
<proteinExistence type="inferred from homology"/>
<comment type="function">
    <text evidence="1">NAD-binding protein involved in the addition of a carboxymethylaminomethyl (cmnm) group at the wobble position (U34) of certain tRNAs, forming tRNA-cmnm(5)s(2)U34.</text>
</comment>
<comment type="cofactor">
    <cofactor evidence="1">
        <name>FAD</name>
        <dbReference type="ChEBI" id="CHEBI:57692"/>
    </cofactor>
</comment>
<comment type="subunit">
    <text evidence="1">Homodimer. Heterotetramer of two MnmE and two MnmG subunits.</text>
</comment>
<comment type="subcellular location">
    <subcellularLocation>
        <location evidence="1">Cytoplasm</location>
    </subcellularLocation>
</comment>
<comment type="similarity">
    <text evidence="1">Belongs to the MnmG family.</text>
</comment>
<name>MNMG_PARM1</name>